<organism>
    <name type="scientific">Streptococcus pneumoniae serotype 4 (strain ATCC BAA-334 / TIGR4)</name>
    <dbReference type="NCBI Taxonomy" id="170187"/>
    <lineage>
        <taxon>Bacteria</taxon>
        <taxon>Bacillati</taxon>
        <taxon>Bacillota</taxon>
        <taxon>Bacilli</taxon>
        <taxon>Lactobacillales</taxon>
        <taxon>Streptococcaceae</taxon>
        <taxon>Streptococcus</taxon>
    </lineage>
</organism>
<keyword id="KW-1185">Reference proteome</keyword>
<keyword id="KW-0687">Ribonucleoprotein</keyword>
<keyword id="KW-0689">Ribosomal protein</keyword>
<keyword id="KW-0694">RNA-binding</keyword>
<keyword id="KW-0699">rRNA-binding</keyword>
<feature type="chain" id="PRO_0000176854" description="Small ribosomal subunit protein bS6">
    <location>
        <begin position="1"/>
        <end position="96"/>
    </location>
</feature>
<sequence>MAKYEILYIIRPNIEEEAKNALVARFDSILTDNGATVVESKTWEKRRLAYEIQDFREGLYHIVNVEANDDAALKEFDRLSKINADILRHMIVKIDA</sequence>
<proteinExistence type="inferred from homology"/>
<dbReference type="EMBL" id="AE005672">
    <property type="protein sequence ID" value="AAK75629.1"/>
    <property type="molecule type" value="Genomic_DNA"/>
</dbReference>
<dbReference type="PIR" id="D95179">
    <property type="entry name" value="D95179"/>
</dbReference>
<dbReference type="RefSeq" id="WP_001151785.1">
    <property type="nucleotide sequence ID" value="NZ_CP155539.1"/>
</dbReference>
<dbReference type="SMR" id="P66602"/>
<dbReference type="PaxDb" id="170187-SP_1541"/>
<dbReference type="EnsemblBacteria" id="AAK75629">
    <property type="protein sequence ID" value="AAK75629"/>
    <property type="gene ID" value="SP_1541"/>
</dbReference>
<dbReference type="GeneID" id="45653220"/>
<dbReference type="KEGG" id="spn:SP_1541"/>
<dbReference type="eggNOG" id="COG0360">
    <property type="taxonomic scope" value="Bacteria"/>
</dbReference>
<dbReference type="PhylomeDB" id="P66602"/>
<dbReference type="BioCyc" id="SPNE170187:G1FZB-1559-MONOMER"/>
<dbReference type="Proteomes" id="UP000000585">
    <property type="component" value="Chromosome"/>
</dbReference>
<dbReference type="GO" id="GO:0005737">
    <property type="term" value="C:cytoplasm"/>
    <property type="evidence" value="ECO:0007669"/>
    <property type="project" value="UniProtKB-ARBA"/>
</dbReference>
<dbReference type="GO" id="GO:1990904">
    <property type="term" value="C:ribonucleoprotein complex"/>
    <property type="evidence" value="ECO:0007669"/>
    <property type="project" value="UniProtKB-KW"/>
</dbReference>
<dbReference type="GO" id="GO:0005840">
    <property type="term" value="C:ribosome"/>
    <property type="evidence" value="ECO:0007669"/>
    <property type="project" value="UniProtKB-KW"/>
</dbReference>
<dbReference type="GO" id="GO:0070181">
    <property type="term" value="F:small ribosomal subunit rRNA binding"/>
    <property type="evidence" value="ECO:0007669"/>
    <property type="project" value="TreeGrafter"/>
</dbReference>
<dbReference type="GO" id="GO:0003735">
    <property type="term" value="F:structural constituent of ribosome"/>
    <property type="evidence" value="ECO:0007669"/>
    <property type="project" value="InterPro"/>
</dbReference>
<dbReference type="GO" id="GO:0006412">
    <property type="term" value="P:translation"/>
    <property type="evidence" value="ECO:0007669"/>
    <property type="project" value="UniProtKB-UniRule"/>
</dbReference>
<dbReference type="CDD" id="cd00473">
    <property type="entry name" value="bS6"/>
    <property type="match status" value="1"/>
</dbReference>
<dbReference type="FunFam" id="3.30.70.60:FF:000002">
    <property type="entry name" value="30S ribosomal protein S6"/>
    <property type="match status" value="1"/>
</dbReference>
<dbReference type="Gene3D" id="3.30.70.60">
    <property type="match status" value="1"/>
</dbReference>
<dbReference type="HAMAP" id="MF_00360">
    <property type="entry name" value="Ribosomal_bS6"/>
    <property type="match status" value="1"/>
</dbReference>
<dbReference type="InterPro" id="IPR000529">
    <property type="entry name" value="Ribosomal_bS6"/>
</dbReference>
<dbReference type="InterPro" id="IPR035980">
    <property type="entry name" value="Ribosomal_bS6_sf"/>
</dbReference>
<dbReference type="InterPro" id="IPR020814">
    <property type="entry name" value="Ribosomal_S6_plastid/chlpt"/>
</dbReference>
<dbReference type="InterPro" id="IPR014717">
    <property type="entry name" value="Transl_elong_EF1B/ribsomal_bS6"/>
</dbReference>
<dbReference type="NCBIfam" id="TIGR00166">
    <property type="entry name" value="S6"/>
    <property type="match status" value="1"/>
</dbReference>
<dbReference type="PANTHER" id="PTHR21011">
    <property type="entry name" value="MITOCHONDRIAL 28S RIBOSOMAL PROTEIN S6"/>
    <property type="match status" value="1"/>
</dbReference>
<dbReference type="PANTHER" id="PTHR21011:SF1">
    <property type="entry name" value="SMALL RIBOSOMAL SUBUNIT PROTEIN BS6M"/>
    <property type="match status" value="1"/>
</dbReference>
<dbReference type="Pfam" id="PF01250">
    <property type="entry name" value="Ribosomal_S6"/>
    <property type="match status" value="1"/>
</dbReference>
<dbReference type="SUPFAM" id="SSF54995">
    <property type="entry name" value="Ribosomal protein S6"/>
    <property type="match status" value="1"/>
</dbReference>
<accession>P66602</accession>
<accession>Q97PR1</accession>
<comment type="function">
    <text evidence="1">Binds together with bS18 to 16S ribosomal RNA.</text>
</comment>
<comment type="similarity">
    <text evidence="1">Belongs to the bacterial ribosomal protein bS6 family.</text>
</comment>
<protein>
    <recommendedName>
        <fullName evidence="1">Small ribosomal subunit protein bS6</fullName>
    </recommendedName>
    <alternativeName>
        <fullName evidence="2">30S ribosomal protein S6</fullName>
    </alternativeName>
</protein>
<reference key="1">
    <citation type="journal article" date="2001" name="Science">
        <title>Complete genome sequence of a virulent isolate of Streptococcus pneumoniae.</title>
        <authorList>
            <person name="Tettelin H."/>
            <person name="Nelson K.E."/>
            <person name="Paulsen I.T."/>
            <person name="Eisen J.A."/>
            <person name="Read T.D."/>
            <person name="Peterson S.N."/>
            <person name="Heidelberg J.F."/>
            <person name="DeBoy R.T."/>
            <person name="Haft D.H."/>
            <person name="Dodson R.J."/>
            <person name="Durkin A.S."/>
            <person name="Gwinn M.L."/>
            <person name="Kolonay J.F."/>
            <person name="Nelson W.C."/>
            <person name="Peterson J.D."/>
            <person name="Umayam L.A."/>
            <person name="White O."/>
            <person name="Salzberg S.L."/>
            <person name="Lewis M.R."/>
            <person name="Radune D."/>
            <person name="Holtzapple E.K."/>
            <person name="Khouri H.M."/>
            <person name="Wolf A.M."/>
            <person name="Utterback T.R."/>
            <person name="Hansen C.L."/>
            <person name="McDonald L.A."/>
            <person name="Feldblyum T.V."/>
            <person name="Angiuoli S.V."/>
            <person name="Dickinson T."/>
            <person name="Hickey E.K."/>
            <person name="Holt I.E."/>
            <person name="Loftus B.J."/>
            <person name="Yang F."/>
            <person name="Smith H.O."/>
            <person name="Venter J.C."/>
            <person name="Dougherty B.A."/>
            <person name="Morrison D.A."/>
            <person name="Hollingshead S.K."/>
            <person name="Fraser C.M."/>
        </authorList>
    </citation>
    <scope>NUCLEOTIDE SEQUENCE [LARGE SCALE GENOMIC DNA]</scope>
    <source>
        <strain>ATCC BAA-334 / TIGR4</strain>
    </source>
</reference>
<evidence type="ECO:0000255" key="1">
    <source>
        <dbReference type="HAMAP-Rule" id="MF_00360"/>
    </source>
</evidence>
<evidence type="ECO:0000305" key="2"/>
<gene>
    <name evidence="1" type="primary">rpsF</name>
    <name type="ordered locus">SP_1541</name>
</gene>
<name>RS6_STRPN</name>